<comment type="function">
    <text evidence="1">Catalyzes the ATP-dependent phosphorylation of N-acetyl-L-glutamate.</text>
</comment>
<comment type="catalytic activity">
    <reaction evidence="1">
        <text>N-acetyl-L-glutamate + ATP = N-acetyl-L-glutamyl 5-phosphate + ADP</text>
        <dbReference type="Rhea" id="RHEA:14629"/>
        <dbReference type="ChEBI" id="CHEBI:30616"/>
        <dbReference type="ChEBI" id="CHEBI:44337"/>
        <dbReference type="ChEBI" id="CHEBI:57936"/>
        <dbReference type="ChEBI" id="CHEBI:456216"/>
        <dbReference type="EC" id="2.7.2.8"/>
    </reaction>
</comment>
<comment type="pathway">
    <text evidence="1">Amino-acid biosynthesis; L-arginine biosynthesis; N(2)-acetyl-L-ornithine from L-glutamate: step 2/4.</text>
</comment>
<comment type="subcellular location">
    <subcellularLocation>
        <location evidence="1">Cytoplasm</location>
    </subcellularLocation>
</comment>
<comment type="similarity">
    <text evidence="1">Belongs to the acetylglutamate kinase family. ArgB subfamily.</text>
</comment>
<feature type="chain" id="PRO_1000075320" description="Acetylglutamate kinase">
    <location>
        <begin position="1"/>
        <end position="260"/>
    </location>
</feature>
<feature type="binding site" evidence="1">
    <location>
        <begin position="46"/>
        <end position="47"/>
    </location>
    <ligand>
        <name>substrate</name>
    </ligand>
</feature>
<feature type="binding site" evidence="1">
    <location>
        <position position="68"/>
    </location>
    <ligand>
        <name>substrate</name>
    </ligand>
</feature>
<feature type="binding site" evidence="1">
    <location>
        <position position="160"/>
    </location>
    <ligand>
        <name>substrate</name>
    </ligand>
</feature>
<feature type="site" description="Transition state stabilizer" evidence="1">
    <location>
        <position position="11"/>
    </location>
</feature>
<feature type="site" description="Transition state stabilizer" evidence="1">
    <location>
        <position position="219"/>
    </location>
</feature>
<dbReference type="EC" id="2.7.2.8" evidence="1"/>
<dbReference type="EMBL" id="CP000891">
    <property type="protein sequence ID" value="ABX51370.1"/>
    <property type="molecule type" value="Genomic_DNA"/>
</dbReference>
<dbReference type="RefSeq" id="WP_011848138.1">
    <property type="nucleotide sequence ID" value="NC_009997.1"/>
</dbReference>
<dbReference type="SMR" id="A9KTY9"/>
<dbReference type="GeneID" id="11774198"/>
<dbReference type="KEGG" id="sbn:Sbal195_4212"/>
<dbReference type="HOGENOM" id="CLU_053680_1_1_6"/>
<dbReference type="UniPathway" id="UPA00068">
    <property type="reaction ID" value="UER00107"/>
</dbReference>
<dbReference type="Proteomes" id="UP000000770">
    <property type="component" value="Chromosome"/>
</dbReference>
<dbReference type="GO" id="GO:0005737">
    <property type="term" value="C:cytoplasm"/>
    <property type="evidence" value="ECO:0007669"/>
    <property type="project" value="UniProtKB-SubCell"/>
</dbReference>
<dbReference type="GO" id="GO:0003991">
    <property type="term" value="F:acetylglutamate kinase activity"/>
    <property type="evidence" value="ECO:0007669"/>
    <property type="project" value="UniProtKB-UniRule"/>
</dbReference>
<dbReference type="GO" id="GO:0005524">
    <property type="term" value="F:ATP binding"/>
    <property type="evidence" value="ECO:0007669"/>
    <property type="project" value="UniProtKB-UniRule"/>
</dbReference>
<dbReference type="GO" id="GO:0042450">
    <property type="term" value="P:arginine biosynthetic process via ornithine"/>
    <property type="evidence" value="ECO:0007669"/>
    <property type="project" value="UniProtKB-UniRule"/>
</dbReference>
<dbReference type="GO" id="GO:0006526">
    <property type="term" value="P:L-arginine biosynthetic process"/>
    <property type="evidence" value="ECO:0007669"/>
    <property type="project" value="UniProtKB-UniPathway"/>
</dbReference>
<dbReference type="FunFam" id="3.40.1160.10:FF:000008">
    <property type="entry name" value="Acetylglutamate kinase"/>
    <property type="match status" value="1"/>
</dbReference>
<dbReference type="Gene3D" id="3.40.1160.10">
    <property type="entry name" value="Acetylglutamate kinase-like"/>
    <property type="match status" value="1"/>
</dbReference>
<dbReference type="HAMAP" id="MF_00082">
    <property type="entry name" value="ArgB"/>
    <property type="match status" value="1"/>
</dbReference>
<dbReference type="InterPro" id="IPR036393">
    <property type="entry name" value="AceGlu_kinase-like_sf"/>
</dbReference>
<dbReference type="InterPro" id="IPR004662">
    <property type="entry name" value="AcgluKinase_fam"/>
</dbReference>
<dbReference type="InterPro" id="IPR037528">
    <property type="entry name" value="ArgB"/>
</dbReference>
<dbReference type="InterPro" id="IPR001048">
    <property type="entry name" value="Asp/Glu/Uridylate_kinase"/>
</dbReference>
<dbReference type="NCBIfam" id="TIGR00761">
    <property type="entry name" value="argB"/>
    <property type="match status" value="1"/>
</dbReference>
<dbReference type="PANTHER" id="PTHR23342">
    <property type="entry name" value="N-ACETYLGLUTAMATE SYNTHASE"/>
    <property type="match status" value="1"/>
</dbReference>
<dbReference type="PANTHER" id="PTHR23342:SF0">
    <property type="entry name" value="N-ACETYLGLUTAMATE SYNTHASE, MITOCHONDRIAL"/>
    <property type="match status" value="1"/>
</dbReference>
<dbReference type="Pfam" id="PF00696">
    <property type="entry name" value="AA_kinase"/>
    <property type="match status" value="1"/>
</dbReference>
<dbReference type="PIRSF" id="PIRSF000728">
    <property type="entry name" value="NAGK"/>
    <property type="match status" value="1"/>
</dbReference>
<dbReference type="SUPFAM" id="SSF53633">
    <property type="entry name" value="Carbamate kinase-like"/>
    <property type="match status" value="1"/>
</dbReference>
<evidence type="ECO:0000255" key="1">
    <source>
        <dbReference type="HAMAP-Rule" id="MF_00082"/>
    </source>
</evidence>
<gene>
    <name evidence="1" type="primary">argB</name>
    <name type="ordered locus">Sbal195_4212</name>
</gene>
<reference key="1">
    <citation type="submission" date="2007-11" db="EMBL/GenBank/DDBJ databases">
        <title>Complete sequence of chromosome of Shewanella baltica OS195.</title>
        <authorList>
            <consortium name="US DOE Joint Genome Institute"/>
            <person name="Copeland A."/>
            <person name="Lucas S."/>
            <person name="Lapidus A."/>
            <person name="Barry K."/>
            <person name="Glavina del Rio T."/>
            <person name="Dalin E."/>
            <person name="Tice H."/>
            <person name="Pitluck S."/>
            <person name="Chain P."/>
            <person name="Malfatti S."/>
            <person name="Shin M."/>
            <person name="Vergez L."/>
            <person name="Schmutz J."/>
            <person name="Larimer F."/>
            <person name="Land M."/>
            <person name="Hauser L."/>
            <person name="Kyrpides N."/>
            <person name="Kim E."/>
            <person name="Brettar I."/>
            <person name="Rodrigues J."/>
            <person name="Konstantinidis K."/>
            <person name="Klappenbach J."/>
            <person name="Hofle M."/>
            <person name="Tiedje J."/>
            <person name="Richardson P."/>
        </authorList>
    </citation>
    <scope>NUCLEOTIDE SEQUENCE [LARGE SCALE GENOMIC DNA]</scope>
    <source>
        <strain>OS195</strain>
    </source>
</reference>
<proteinExistence type="inferred from homology"/>
<sequence length="260" mass="26844">MSTNNSVLVLKVGGALLQCEMGMARLMDTAAAMLANGQQVLMVHGGGCLVDEQLAANGMETVKLEGLRVTPPEQMPIIAGALAGTSNKILQGAATKAGIVSVGMSLADGNTVSAKIKDERLGLVGEVTPKDGAYLKFILAQGWMPICSSIAMMDDGQMLNVNADQAATALAKLVGGKLVLLSDVSGVLDGKGQLIHSLNGKQIADLVKQGVIEKGMKVKVEAALEVAQWMGQAVQVASWRDASQLIALAKGEAVGTQIQP</sequence>
<organism>
    <name type="scientific">Shewanella baltica (strain OS195)</name>
    <dbReference type="NCBI Taxonomy" id="399599"/>
    <lineage>
        <taxon>Bacteria</taxon>
        <taxon>Pseudomonadati</taxon>
        <taxon>Pseudomonadota</taxon>
        <taxon>Gammaproteobacteria</taxon>
        <taxon>Alteromonadales</taxon>
        <taxon>Shewanellaceae</taxon>
        <taxon>Shewanella</taxon>
    </lineage>
</organism>
<name>ARGB_SHEB9</name>
<accession>A9KTY9</accession>
<protein>
    <recommendedName>
        <fullName evidence="1">Acetylglutamate kinase</fullName>
        <ecNumber evidence="1">2.7.2.8</ecNumber>
    </recommendedName>
    <alternativeName>
        <fullName evidence="1">N-acetyl-L-glutamate 5-phosphotransferase</fullName>
    </alternativeName>
    <alternativeName>
        <fullName evidence="1">NAG kinase</fullName>
        <shortName evidence="1">NAGK</shortName>
    </alternativeName>
</protein>
<keyword id="KW-0028">Amino-acid biosynthesis</keyword>
<keyword id="KW-0055">Arginine biosynthesis</keyword>
<keyword id="KW-0067">ATP-binding</keyword>
<keyword id="KW-0963">Cytoplasm</keyword>
<keyword id="KW-0418">Kinase</keyword>
<keyword id="KW-0547">Nucleotide-binding</keyword>
<keyword id="KW-0808">Transferase</keyword>